<accession>Q8S8T4</accession>
<organism>
    <name type="scientific">Arabidopsis thaliana</name>
    <name type="common">Mouse-ear cress</name>
    <dbReference type="NCBI Taxonomy" id="3702"/>
    <lineage>
        <taxon>Eukaryota</taxon>
        <taxon>Viridiplantae</taxon>
        <taxon>Streptophyta</taxon>
        <taxon>Embryophyta</taxon>
        <taxon>Tracheophyta</taxon>
        <taxon>Spermatophyta</taxon>
        <taxon>Magnoliopsida</taxon>
        <taxon>eudicotyledons</taxon>
        <taxon>Gunneridae</taxon>
        <taxon>Pentapetalae</taxon>
        <taxon>rosids</taxon>
        <taxon>malvids</taxon>
        <taxon>Brassicales</taxon>
        <taxon>Brassicaceae</taxon>
        <taxon>Camelineae</taxon>
        <taxon>Arabidopsis</taxon>
    </lineage>
</organism>
<gene>
    <name type="primary">UXS4</name>
    <name type="ordered locus">At2g47650</name>
    <name type="ORF">T30B22.31</name>
</gene>
<keyword id="KW-0007">Acetylation</keyword>
<keyword id="KW-0025">Alternative splicing</keyword>
<keyword id="KW-0210">Decarboxylase</keyword>
<keyword id="KW-0333">Golgi apparatus</keyword>
<keyword id="KW-0456">Lyase</keyword>
<keyword id="KW-0472">Membrane</keyword>
<keyword id="KW-0520">NAD</keyword>
<keyword id="KW-1185">Reference proteome</keyword>
<keyword id="KW-0735">Signal-anchor</keyword>
<keyword id="KW-0812">Transmembrane</keyword>
<keyword id="KW-1133">Transmembrane helix</keyword>
<sequence>MASELTNRRHEIEQPEAESYYPKPIKPWFVAIRPIRYMLREQRLVFVLVGIAIATLGFTIFSKSSNHQPIPYDVDPLSGYGMRSESSYLPATIHKKPSIEYMSRIGSAGGKIPLGLKRKVLRVVVTGGAGFVGSHLVDRLMARGDNVIVVDNFFTGRKENVMHHFNNPNFEMIRHDVVEPILLEVDQIYHLACPASPVHYKFNPVKTIKTNVVGTLNMLGLAKRVGARFLLTSTSEVYGDPLQHPQVETYWGNVNPIGVRSCYDEGKRTAETLTMDYHRGANVEVRIARIFNTYGPRMCIDDGRVVSNFVAQALRKEPLTVYGDGKQTRSFQFVSDLVEGLMRLMEGEHVGPFNLGNPGEFTMLELAKVVQETIDPNAKIEFRPNTEDDPHKRKPDITKAKELLGWEPKVALRQGLPLMVKDFRQRVFGDQKQDSSTTSSSTE</sequence>
<dbReference type="EC" id="4.1.1.35"/>
<dbReference type="EMBL" id="AC002535">
    <property type="protein sequence ID" value="AAM14846.1"/>
    <property type="molecule type" value="Genomic_DNA"/>
</dbReference>
<dbReference type="EMBL" id="CP002685">
    <property type="protein sequence ID" value="AEC10871.1"/>
    <property type="molecule type" value="Genomic_DNA"/>
</dbReference>
<dbReference type="EMBL" id="BT022016">
    <property type="protein sequence ID" value="AAY25428.1"/>
    <property type="molecule type" value="mRNA"/>
</dbReference>
<dbReference type="EMBL" id="AK316734">
    <property type="protein sequence ID" value="BAH19459.1"/>
    <property type="molecule type" value="mRNA"/>
</dbReference>
<dbReference type="PIR" id="T00419">
    <property type="entry name" value="T00419"/>
</dbReference>
<dbReference type="RefSeq" id="NP_182287.1">
    <molecule id="Q8S8T4-1"/>
    <property type="nucleotide sequence ID" value="NM_130333.4"/>
</dbReference>
<dbReference type="SMR" id="Q8S8T4"/>
<dbReference type="FunCoup" id="Q8S8T4">
    <property type="interactions" value="3056"/>
</dbReference>
<dbReference type="STRING" id="3702.Q8S8T4"/>
<dbReference type="PaxDb" id="3702-AT2G47650.2"/>
<dbReference type="ProteomicsDB" id="228544">
    <molecule id="Q8S8T4-1"/>
</dbReference>
<dbReference type="EnsemblPlants" id="AT2G47650.1">
    <molecule id="Q8S8T4-1"/>
    <property type="protein sequence ID" value="AT2G47650.1"/>
    <property type="gene ID" value="AT2G47650"/>
</dbReference>
<dbReference type="GeneID" id="819378"/>
<dbReference type="Gramene" id="AT2G47650.1">
    <molecule id="Q8S8T4-1"/>
    <property type="protein sequence ID" value="AT2G47650.1"/>
    <property type="gene ID" value="AT2G47650"/>
</dbReference>
<dbReference type="KEGG" id="ath:AT2G47650"/>
<dbReference type="Araport" id="AT2G47650"/>
<dbReference type="TAIR" id="AT2G47650">
    <property type="gene designation" value="UXS4"/>
</dbReference>
<dbReference type="eggNOG" id="KOG1429">
    <property type="taxonomic scope" value="Eukaryota"/>
</dbReference>
<dbReference type="HOGENOM" id="CLU_007383_2_1_1"/>
<dbReference type="InParanoid" id="Q8S8T4"/>
<dbReference type="OMA" id="FAPQAIM"/>
<dbReference type="PhylomeDB" id="Q8S8T4"/>
<dbReference type="UniPathway" id="UPA00796">
    <property type="reaction ID" value="UER00771"/>
</dbReference>
<dbReference type="PRO" id="PR:Q8S8T4"/>
<dbReference type="Proteomes" id="UP000006548">
    <property type="component" value="Chromosome 2"/>
</dbReference>
<dbReference type="ExpressionAtlas" id="Q8S8T4">
    <property type="expression patterns" value="baseline and differential"/>
</dbReference>
<dbReference type="GO" id="GO:0032580">
    <property type="term" value="C:Golgi cisterna membrane"/>
    <property type="evidence" value="ECO:0007669"/>
    <property type="project" value="UniProtKB-SubCell"/>
</dbReference>
<dbReference type="GO" id="GO:0070403">
    <property type="term" value="F:NAD+ binding"/>
    <property type="evidence" value="ECO:0007669"/>
    <property type="project" value="InterPro"/>
</dbReference>
<dbReference type="GO" id="GO:0048040">
    <property type="term" value="F:UDP-glucuronate decarboxylase activity"/>
    <property type="evidence" value="ECO:0007669"/>
    <property type="project" value="UniProtKB-EC"/>
</dbReference>
<dbReference type="GO" id="GO:0042732">
    <property type="term" value="P:D-xylose metabolic process"/>
    <property type="evidence" value="ECO:0007669"/>
    <property type="project" value="InterPro"/>
</dbReference>
<dbReference type="GO" id="GO:0033320">
    <property type="term" value="P:UDP-D-xylose biosynthetic process"/>
    <property type="evidence" value="ECO:0007669"/>
    <property type="project" value="UniProtKB-UniPathway"/>
</dbReference>
<dbReference type="CDD" id="cd05230">
    <property type="entry name" value="UGD_SDR_e"/>
    <property type="match status" value="1"/>
</dbReference>
<dbReference type="FunFam" id="3.40.50.720:FF:000044">
    <property type="entry name" value="UDP-glucuronic acid decarboxylase 1"/>
    <property type="match status" value="1"/>
</dbReference>
<dbReference type="FunFam" id="3.40.50.720:FF:000073">
    <property type="entry name" value="UDP-glucuronic acid decarboxylase 2"/>
    <property type="match status" value="1"/>
</dbReference>
<dbReference type="Gene3D" id="3.40.50.720">
    <property type="entry name" value="NAD(P)-binding Rossmann-like Domain"/>
    <property type="match status" value="2"/>
</dbReference>
<dbReference type="InterPro" id="IPR016040">
    <property type="entry name" value="NAD(P)-bd_dom"/>
</dbReference>
<dbReference type="InterPro" id="IPR036291">
    <property type="entry name" value="NAD(P)-bd_dom_sf"/>
</dbReference>
<dbReference type="InterPro" id="IPR044516">
    <property type="entry name" value="UXS-like"/>
</dbReference>
<dbReference type="PANTHER" id="PTHR43078:SF6">
    <property type="entry name" value="UDP-GLUCURONIC ACID DECARBOXYLASE 1"/>
    <property type="match status" value="1"/>
</dbReference>
<dbReference type="PANTHER" id="PTHR43078">
    <property type="entry name" value="UDP-GLUCURONIC ACID DECARBOXYLASE-RELATED"/>
    <property type="match status" value="1"/>
</dbReference>
<dbReference type="Pfam" id="PF16363">
    <property type="entry name" value="GDP_Man_Dehyd"/>
    <property type="match status" value="1"/>
</dbReference>
<dbReference type="SUPFAM" id="SSF51735">
    <property type="entry name" value="NAD(P)-binding Rossmann-fold domains"/>
    <property type="match status" value="1"/>
</dbReference>
<reference key="1">
    <citation type="journal article" date="1999" name="Nature">
        <title>Sequence and analysis of chromosome 2 of the plant Arabidopsis thaliana.</title>
        <authorList>
            <person name="Lin X."/>
            <person name="Kaul S."/>
            <person name="Rounsley S.D."/>
            <person name="Shea T.P."/>
            <person name="Benito M.-I."/>
            <person name="Town C.D."/>
            <person name="Fujii C.Y."/>
            <person name="Mason T.M."/>
            <person name="Bowman C.L."/>
            <person name="Barnstead M.E."/>
            <person name="Feldblyum T.V."/>
            <person name="Buell C.R."/>
            <person name="Ketchum K.A."/>
            <person name="Lee J.J."/>
            <person name="Ronning C.M."/>
            <person name="Koo H.L."/>
            <person name="Moffat K.S."/>
            <person name="Cronin L.A."/>
            <person name="Shen M."/>
            <person name="Pai G."/>
            <person name="Van Aken S."/>
            <person name="Umayam L."/>
            <person name="Tallon L.J."/>
            <person name="Gill J.E."/>
            <person name="Adams M.D."/>
            <person name="Carrera A.J."/>
            <person name="Creasy T.H."/>
            <person name="Goodman H.M."/>
            <person name="Somerville C.R."/>
            <person name="Copenhaver G.P."/>
            <person name="Preuss D."/>
            <person name="Nierman W.C."/>
            <person name="White O."/>
            <person name="Eisen J.A."/>
            <person name="Salzberg S.L."/>
            <person name="Fraser C.M."/>
            <person name="Venter J.C."/>
        </authorList>
    </citation>
    <scope>NUCLEOTIDE SEQUENCE [LARGE SCALE GENOMIC DNA]</scope>
    <source>
        <strain>cv. Columbia</strain>
    </source>
</reference>
<reference key="2">
    <citation type="journal article" date="2017" name="Plant J.">
        <title>Araport11: a complete reannotation of the Arabidopsis thaliana reference genome.</title>
        <authorList>
            <person name="Cheng C.Y."/>
            <person name="Krishnakumar V."/>
            <person name="Chan A.P."/>
            <person name="Thibaud-Nissen F."/>
            <person name="Schobel S."/>
            <person name="Town C.D."/>
        </authorList>
    </citation>
    <scope>GENOME REANNOTATION</scope>
    <source>
        <strain>cv. Columbia</strain>
    </source>
</reference>
<reference key="3">
    <citation type="submission" date="2005-05" db="EMBL/GenBank/DDBJ databases">
        <title>Arabidopsis ORF clones.</title>
        <authorList>
            <person name="Kim C.J."/>
            <person name="Chen H."/>
            <person name="Cheuk R.F."/>
            <person name="Shinn P."/>
            <person name="Ecker J.R."/>
        </authorList>
    </citation>
    <scope>NUCLEOTIDE SEQUENCE [LARGE SCALE MRNA]</scope>
    <source>
        <strain>cv. Columbia</strain>
    </source>
</reference>
<reference key="4">
    <citation type="journal article" date="2009" name="DNA Res.">
        <title>Analysis of multiple occurrences of alternative splicing events in Arabidopsis thaliana using novel sequenced full-length cDNAs.</title>
        <authorList>
            <person name="Iida K."/>
            <person name="Fukami-Kobayashi K."/>
            <person name="Toyoda A."/>
            <person name="Sakaki Y."/>
            <person name="Kobayashi M."/>
            <person name="Seki M."/>
            <person name="Shinozaki K."/>
        </authorList>
    </citation>
    <scope>NUCLEOTIDE SEQUENCE [LARGE SCALE MRNA]</scope>
    <source>
        <strain>cv. Columbia</strain>
        <tissue>Rosette leaf</tissue>
    </source>
</reference>
<reference key="5">
    <citation type="journal article" date="2002" name="Plant Physiol.">
        <title>Biosynthesis of UDP-xylose. Cloning and characterization of a novel Arabidopsis gene family, UXS, encoding soluble and putative membrane-bound UDP-glucuronic acid decarboxylase isoforms.</title>
        <authorList>
            <person name="Harper A.D."/>
            <person name="Bar-Peled M."/>
        </authorList>
    </citation>
    <scope>GENE FAMILY</scope>
</reference>
<evidence type="ECO:0000250" key="1"/>
<evidence type="ECO:0000250" key="2">
    <source>
        <dbReference type="UniProtKB" id="Q9LZI2"/>
    </source>
</evidence>
<evidence type="ECO:0000255" key="3"/>
<evidence type="ECO:0000305" key="4"/>
<feature type="initiator methionine" description="Removed" evidence="2">
    <location>
        <position position="1"/>
    </location>
</feature>
<feature type="chain" id="PRO_0000421985" description="UDP-glucuronic acid decarboxylase 4">
    <location>
        <begin position="2"/>
        <end position="443"/>
    </location>
</feature>
<feature type="topological domain" description="Cytoplasmic" evidence="3">
    <location>
        <begin position="2"/>
        <end position="43"/>
    </location>
</feature>
<feature type="transmembrane region" description="Helical; Signal-anchor for type II membrane protein" evidence="3">
    <location>
        <begin position="44"/>
        <end position="64"/>
    </location>
</feature>
<feature type="topological domain" description="Lumenal" evidence="3">
    <location>
        <begin position="65"/>
        <end position="443"/>
    </location>
</feature>
<feature type="active site" description="Proton acceptor" evidence="1">
    <location>
        <position position="263"/>
    </location>
</feature>
<feature type="binding site" evidence="1">
    <location>
        <begin position="151"/>
        <end position="176"/>
    </location>
    <ligand>
        <name>NAD(+)</name>
        <dbReference type="ChEBI" id="CHEBI:57540"/>
    </ligand>
</feature>
<feature type="binding site" evidence="1">
    <location>
        <position position="260"/>
    </location>
    <ligand>
        <name>substrate</name>
    </ligand>
</feature>
<feature type="binding site" evidence="1">
    <location>
        <begin position="263"/>
        <end position="267"/>
    </location>
    <ligand>
        <name>NAD(+)</name>
        <dbReference type="ChEBI" id="CHEBI:57540"/>
    </ligand>
</feature>
<feature type="binding site" evidence="1">
    <location>
        <position position="292"/>
    </location>
    <ligand>
        <name>substrate</name>
    </ligand>
</feature>
<feature type="binding site" evidence="1">
    <location>
        <position position="304"/>
    </location>
    <ligand>
        <name>NAD(+)</name>
        <dbReference type="ChEBI" id="CHEBI:57540"/>
    </ligand>
</feature>
<feature type="binding site" evidence="1">
    <location>
        <begin position="305"/>
        <end position="309"/>
    </location>
    <ligand>
        <name>substrate</name>
    </ligand>
</feature>
<feature type="binding site" evidence="1">
    <location>
        <begin position="322"/>
        <end position="329"/>
    </location>
    <ligand>
        <name>substrate</name>
    </ligand>
</feature>
<feature type="binding site" evidence="1">
    <location>
        <begin position="389"/>
        <end position="393"/>
    </location>
    <ligand>
        <name>substrate</name>
    </ligand>
</feature>
<feature type="modified residue" description="N-acetylalanine" evidence="2">
    <location>
        <position position="2"/>
    </location>
</feature>
<protein>
    <recommendedName>
        <fullName>UDP-glucuronic acid decarboxylase 4</fullName>
        <ecNumber>4.1.1.35</ecNumber>
    </recommendedName>
    <alternativeName>
        <fullName>UDP-XYL synthase 4</fullName>
    </alternativeName>
    <alternativeName>
        <fullName>UDP-glucuronate decarboxylase 4</fullName>
        <shortName>UGD</shortName>
        <shortName>UXS-4</shortName>
    </alternativeName>
</protein>
<proteinExistence type="evidence at transcript level"/>
<comment type="function">
    <text evidence="1">Catalyzes the NAD-dependent decarboxylation of UDP-glucuronic acid to UDP-xylose. Necessary for the biosynthesis of the core tetrasaccharide in glycosaminoglycan biosynthesis (By similarity).</text>
</comment>
<comment type="catalytic activity">
    <reaction>
        <text>UDP-alpha-D-glucuronate + H(+) = UDP-alpha-D-xylose + CO2</text>
        <dbReference type="Rhea" id="RHEA:23916"/>
        <dbReference type="ChEBI" id="CHEBI:15378"/>
        <dbReference type="ChEBI" id="CHEBI:16526"/>
        <dbReference type="ChEBI" id="CHEBI:57632"/>
        <dbReference type="ChEBI" id="CHEBI:58052"/>
        <dbReference type="EC" id="4.1.1.35"/>
    </reaction>
</comment>
<comment type="cofactor">
    <cofactor evidence="1">
        <name>NAD(+)</name>
        <dbReference type="ChEBI" id="CHEBI:57540"/>
    </cofactor>
</comment>
<comment type="pathway">
    <text>Nucleotide-sugar biosynthesis; UDP-alpha-D-xylose biosynthesis; UDP-alpha-D-xylose from UDP-alpha-D-glucuronate: step 1/1.</text>
</comment>
<comment type="subcellular location">
    <subcellularLocation>
        <location evidence="1">Golgi apparatus</location>
        <location evidence="1">Golgi stack membrane</location>
        <topology evidence="1">Single-pass type II membrane protein</topology>
    </subcellularLocation>
</comment>
<comment type="alternative products">
    <event type="alternative splicing"/>
    <isoform>
        <id>Q8S8T4-1</id>
        <name>1</name>
        <sequence type="displayed"/>
    </isoform>
    <text>A number of isoforms are produced. According to EST sequences.</text>
</comment>
<comment type="similarity">
    <text evidence="4">Belongs to the NAD(P)-dependent epimerase/dehydratase family. UDP-glucuronic acid decarboxylase subfamily.</text>
</comment>
<name>UXS4_ARATH</name>